<accession>D4A6D8</accession>
<proteinExistence type="inferred from homology"/>
<organism>
    <name type="scientific">Rattus norvegicus</name>
    <name type="common">Rat</name>
    <dbReference type="NCBI Taxonomy" id="10116"/>
    <lineage>
        <taxon>Eukaryota</taxon>
        <taxon>Metazoa</taxon>
        <taxon>Chordata</taxon>
        <taxon>Craniata</taxon>
        <taxon>Vertebrata</taxon>
        <taxon>Euteleostomi</taxon>
        <taxon>Mammalia</taxon>
        <taxon>Eutheria</taxon>
        <taxon>Euarchontoglires</taxon>
        <taxon>Glires</taxon>
        <taxon>Rodentia</taxon>
        <taxon>Myomorpha</taxon>
        <taxon>Muroidea</taxon>
        <taxon>Muridae</taxon>
        <taxon>Murinae</taxon>
        <taxon>Rattus</taxon>
    </lineage>
</organism>
<name>LRRT1_RAT</name>
<feature type="signal peptide" evidence="2">
    <location>
        <begin position="1"/>
        <end position="34"/>
    </location>
</feature>
<feature type="chain" id="PRO_0000420524" description="Leucine-rich repeat transmembrane neuronal protein 1">
    <location>
        <begin position="35"/>
        <end position="523"/>
    </location>
</feature>
<feature type="topological domain" description="Extracellular" evidence="2">
    <location>
        <begin position="35"/>
        <end position="428"/>
    </location>
</feature>
<feature type="transmembrane region" description="Helical" evidence="2">
    <location>
        <begin position="429"/>
        <end position="449"/>
    </location>
</feature>
<feature type="topological domain" description="Cytoplasmic" evidence="2">
    <location>
        <begin position="450"/>
        <end position="523"/>
    </location>
</feature>
<feature type="domain" description="LRRNT">
    <location>
        <begin position="35"/>
        <end position="63"/>
    </location>
</feature>
<feature type="repeat" description="LRR 1">
    <location>
        <begin position="64"/>
        <end position="87"/>
    </location>
</feature>
<feature type="repeat" description="LRR 2">
    <location>
        <begin position="89"/>
        <end position="111"/>
    </location>
</feature>
<feature type="repeat" description="LRR 3">
    <location>
        <begin position="112"/>
        <end position="135"/>
    </location>
</feature>
<feature type="repeat" description="LRR 4">
    <location>
        <begin position="136"/>
        <end position="159"/>
    </location>
</feature>
<feature type="repeat" description="LRR 5">
    <location>
        <begin position="161"/>
        <end position="183"/>
    </location>
</feature>
<feature type="repeat" description="LRR 6">
    <location>
        <begin position="184"/>
        <end position="207"/>
    </location>
</feature>
<feature type="repeat" description="LRR 7">
    <location>
        <begin position="209"/>
        <end position="231"/>
    </location>
</feature>
<feature type="repeat" description="LRR 8">
    <location>
        <begin position="233"/>
        <end position="255"/>
    </location>
</feature>
<feature type="repeat" description="LRR 9">
    <location>
        <begin position="256"/>
        <end position="278"/>
    </location>
</feature>
<feature type="repeat" description="LRR 10">
    <location>
        <begin position="280"/>
        <end position="302"/>
    </location>
</feature>
<feature type="domain" description="LRRCT">
    <location>
        <begin position="314"/>
        <end position="365"/>
    </location>
</feature>
<feature type="short sequence motif" description="May be involved in DLG4-binding" evidence="1">
    <location>
        <begin position="520"/>
        <end position="523"/>
    </location>
</feature>
<feature type="glycosylation site" description="N-linked (GlcNAc...) asparagine" evidence="2">
    <location>
        <position position="56"/>
    </location>
</feature>
<feature type="glycosylation site" description="N-linked (GlcNAc...) asparagine" evidence="2">
    <location>
        <position position="63"/>
    </location>
</feature>
<feature type="glycosylation site" description="N-linked (GlcNAc...) asparagine" evidence="2">
    <location>
        <position position="130"/>
    </location>
</feature>
<feature type="glycosylation site" description="N-linked (GlcNAc...) asparagine" evidence="2">
    <location>
        <position position="381"/>
    </location>
</feature>
<protein>
    <recommendedName>
        <fullName>Leucine-rich repeat transmembrane neuronal protein 1</fullName>
    </recommendedName>
</protein>
<reference key="1">
    <citation type="submission" date="2005-07" db="EMBL/GenBank/DDBJ databases">
        <authorList>
            <person name="Mural R.J."/>
            <person name="Adams M.D."/>
            <person name="Myers E.W."/>
            <person name="Smith H.O."/>
            <person name="Venter J.C."/>
        </authorList>
    </citation>
    <scope>NUCLEOTIDE SEQUENCE [LARGE SCALE GENOMIC DNA]</scope>
</reference>
<reference key="2">
    <citation type="journal article" date="2009" name="Neuron">
        <title>An unbiased expression screen for synaptogenic proteins identifies the LRRTM protein family as synaptic organizers.</title>
        <authorList>
            <person name="Linhoff M.W."/>
            <person name="Lauren J."/>
            <person name="Cassidy R.M."/>
            <person name="Dobie F.A."/>
            <person name="Takahashi H."/>
            <person name="Nygaard H.B."/>
            <person name="Airaksinen M.S."/>
            <person name="Strittmatter S.M."/>
            <person name="Craig A.M."/>
        </authorList>
    </citation>
    <scope>FUNCTION</scope>
    <scope>SUBCELLULAR LOCATION</scope>
</reference>
<sequence length="523" mass="58732">MDFLLLGLCLHWLLRRPSGVVLCLLGACFQMLPAAPSGCPGQCRCEGRLLYCEALNLTEAPHNLSGLLGLSLRYNSLSELRAGQFTGLMQLTWLYLDHNHICSVQGDAFQKLRRVKELTLSSNQITELANTTFRPMPNLRSVDLSYNKLQALAPDLFHGLRKLTTLHMRANAIQFVPVRIFQDCRSLKFLDIGYNQLKSLARNSFAGLFKLTELHLEHNDLIKVNFAHFPRLISLNSLCLRRNKVAIVVSSLDWVWNLEKMDLSGNEIEYMEPHVFETVPYLQSLQLDSNRLTYIEPRILNSWKSLTSITLAGNLWDCGRNVCALASWLSNFQGRYDANLQCASPEYAQGEDVLDAVYAFHLCEDGAEPTSGHLLSAAVTNRSDLAPPESSATTLVDGGEGLHDSTLEPITVAIPGGEHAENAVQIHKVVTGTMALIFSFLIVVLVLYVSWKCFPASLRQLRQCFVTQRRKQKQKQTMHQMAAMSAQEYYVDYKPNHIEGALVIINEYGSCTCHQQPARECEV</sequence>
<comment type="function">
    <text evidence="3">Exhibits strong synaptogenic activity, restricted to excitatory presynaptic differentiation, acting at both pre- and postsynaptic level.</text>
</comment>
<comment type="subunit">
    <text evidence="1">Interacts with DLG4.</text>
</comment>
<comment type="subcellular location">
    <subcellularLocation>
        <location evidence="3">Cell membrane</location>
        <topology evidence="3">Single-pass type I membrane protein</topology>
    </subcellularLocation>
    <subcellularLocation>
        <location evidence="3">Postsynaptic cell membrane</location>
        <topology evidence="3">Single-pass type I membrane protein</topology>
    </subcellularLocation>
</comment>
<comment type="similarity">
    <text evidence="4">Belongs to the LRRTM family.</text>
</comment>
<gene>
    <name type="primary">Lrrtm1</name>
</gene>
<dbReference type="EMBL" id="CH473957">
    <property type="protein sequence ID" value="EDL91071.1"/>
    <property type="molecule type" value="Genomic_DNA"/>
</dbReference>
<dbReference type="EMBL" id="CH473957">
    <property type="protein sequence ID" value="EDL91072.1"/>
    <property type="molecule type" value="Genomic_DNA"/>
</dbReference>
<dbReference type="RefSeq" id="NP_001102844.1">
    <property type="nucleotide sequence ID" value="NM_001109374.1"/>
</dbReference>
<dbReference type="RefSeq" id="NP_001382551.1">
    <property type="nucleotide sequence ID" value="NM_001395622.1"/>
</dbReference>
<dbReference type="RefSeq" id="XP_006236762.1">
    <property type="nucleotide sequence ID" value="XM_006236700.3"/>
</dbReference>
<dbReference type="RefSeq" id="XP_017448370.1">
    <property type="nucleotide sequence ID" value="XM_017592881.1"/>
</dbReference>
<dbReference type="RefSeq" id="XP_017448371.1">
    <property type="nucleotide sequence ID" value="XM_017592882.1"/>
</dbReference>
<dbReference type="SMR" id="D4A6D8"/>
<dbReference type="FunCoup" id="D4A6D8">
    <property type="interactions" value="547"/>
</dbReference>
<dbReference type="STRING" id="10116.ENSRNOP00000007993"/>
<dbReference type="GlyCosmos" id="D4A6D8">
    <property type="glycosylation" value="4 sites, No reported glycans"/>
</dbReference>
<dbReference type="GlyGen" id="D4A6D8">
    <property type="glycosylation" value="5 sites"/>
</dbReference>
<dbReference type="PhosphoSitePlus" id="D4A6D8"/>
<dbReference type="PaxDb" id="10116-ENSRNOP00000007993"/>
<dbReference type="Ensembl" id="ENSRNOT00000007993.6">
    <property type="protein sequence ID" value="ENSRNOP00000007993.5"/>
    <property type="gene ID" value="ENSRNOG00000006093.6"/>
</dbReference>
<dbReference type="GeneID" id="679668"/>
<dbReference type="UCSC" id="RGD:1585921">
    <property type="organism name" value="rat"/>
</dbReference>
<dbReference type="AGR" id="RGD:1585921"/>
<dbReference type="CTD" id="347730"/>
<dbReference type="RGD" id="1585921">
    <property type="gene designation" value="LRRTM1"/>
</dbReference>
<dbReference type="eggNOG" id="KOG0619">
    <property type="taxonomic scope" value="Eukaryota"/>
</dbReference>
<dbReference type="GeneTree" id="ENSGT00940000161705"/>
<dbReference type="HOGENOM" id="CLU_032965_0_0_1"/>
<dbReference type="InParanoid" id="D4A6D8"/>
<dbReference type="OMA" id="FHLCEDA"/>
<dbReference type="OrthoDB" id="5984255at2759"/>
<dbReference type="PhylomeDB" id="D4A6D8"/>
<dbReference type="TreeFam" id="TF332659"/>
<dbReference type="Reactome" id="R-RNO-6794361">
    <property type="pathway name" value="Neurexins and neuroligins"/>
</dbReference>
<dbReference type="PRO" id="PR:D4A6D8"/>
<dbReference type="Proteomes" id="UP000002494">
    <property type="component" value="Chromosome 4"/>
</dbReference>
<dbReference type="Proteomes" id="UP000234681">
    <property type="component" value="Chromosome 4"/>
</dbReference>
<dbReference type="Bgee" id="ENSRNOG00000006093">
    <property type="expression patterns" value="Expressed in frontal cortex and 3 other cell types or tissues"/>
</dbReference>
<dbReference type="GO" id="GO:0030424">
    <property type="term" value="C:axon"/>
    <property type="evidence" value="ECO:0000266"/>
    <property type="project" value="RGD"/>
</dbReference>
<dbReference type="GO" id="GO:0005783">
    <property type="term" value="C:endoplasmic reticulum"/>
    <property type="evidence" value="ECO:0000266"/>
    <property type="project" value="RGD"/>
</dbReference>
<dbReference type="GO" id="GO:0060076">
    <property type="term" value="C:excitatory synapse"/>
    <property type="evidence" value="ECO:0000314"/>
    <property type="project" value="MGI"/>
</dbReference>
<dbReference type="GO" id="GO:0031012">
    <property type="term" value="C:extracellular matrix"/>
    <property type="evidence" value="ECO:0000318"/>
    <property type="project" value="GO_Central"/>
</dbReference>
<dbReference type="GO" id="GO:0005615">
    <property type="term" value="C:extracellular space"/>
    <property type="evidence" value="ECO:0000318"/>
    <property type="project" value="GO_Central"/>
</dbReference>
<dbReference type="GO" id="GO:0098982">
    <property type="term" value="C:GABA-ergic synapse"/>
    <property type="evidence" value="ECO:0000266"/>
    <property type="project" value="RGD"/>
</dbReference>
<dbReference type="GO" id="GO:0098978">
    <property type="term" value="C:glutamatergic synapse"/>
    <property type="evidence" value="ECO:0000314"/>
    <property type="project" value="SynGO"/>
</dbReference>
<dbReference type="GO" id="GO:0030426">
    <property type="term" value="C:growth cone"/>
    <property type="evidence" value="ECO:0000266"/>
    <property type="project" value="RGD"/>
</dbReference>
<dbReference type="GO" id="GO:0045211">
    <property type="term" value="C:postsynaptic membrane"/>
    <property type="evidence" value="ECO:0000314"/>
    <property type="project" value="SynGO"/>
</dbReference>
<dbReference type="GO" id="GO:0099634">
    <property type="term" value="C:postsynaptic specialization membrane"/>
    <property type="evidence" value="ECO:0000266"/>
    <property type="project" value="RGD"/>
</dbReference>
<dbReference type="GO" id="GO:0051649">
    <property type="term" value="P:establishment of localization in cell"/>
    <property type="evidence" value="ECO:0000266"/>
    <property type="project" value="RGD"/>
</dbReference>
<dbReference type="GO" id="GO:0035640">
    <property type="term" value="P:exploration behavior"/>
    <property type="evidence" value="ECO:0000266"/>
    <property type="project" value="RGD"/>
</dbReference>
<dbReference type="GO" id="GO:0007626">
    <property type="term" value="P:locomotory behavior"/>
    <property type="evidence" value="ECO:0000266"/>
    <property type="project" value="RGD"/>
</dbReference>
<dbReference type="GO" id="GO:0060291">
    <property type="term" value="P:long-term synaptic potentiation"/>
    <property type="evidence" value="ECO:0000266"/>
    <property type="project" value="RGD"/>
</dbReference>
<dbReference type="GO" id="GO:0002091">
    <property type="term" value="P:negative regulation of receptor internalization"/>
    <property type="evidence" value="ECO:0000266"/>
    <property type="project" value="RGD"/>
</dbReference>
<dbReference type="GO" id="GO:0051965">
    <property type="term" value="P:positive regulation of synapse assembly"/>
    <property type="evidence" value="ECO:0000266"/>
    <property type="project" value="RGD"/>
</dbReference>
<dbReference type="GO" id="GO:0035418">
    <property type="term" value="P:protein localization to synapse"/>
    <property type="evidence" value="ECO:0000266"/>
    <property type="project" value="RGD"/>
</dbReference>
<dbReference type="GO" id="GO:0031623">
    <property type="term" value="P:receptor internalization"/>
    <property type="evidence" value="ECO:0000266"/>
    <property type="project" value="RGD"/>
</dbReference>
<dbReference type="GO" id="GO:0099151">
    <property type="term" value="P:regulation of postsynaptic density assembly"/>
    <property type="evidence" value="ECO:0000314"/>
    <property type="project" value="SynGO"/>
</dbReference>
<dbReference type="GO" id="GO:1905606">
    <property type="term" value="P:regulation of presynapse assembly"/>
    <property type="evidence" value="ECO:0000314"/>
    <property type="project" value="SynGO"/>
</dbReference>
<dbReference type="GO" id="GO:0050808">
    <property type="term" value="P:synapse organization"/>
    <property type="evidence" value="ECO:0000314"/>
    <property type="project" value="MGI"/>
</dbReference>
<dbReference type="FunFam" id="3.80.10.10:FF:000005">
    <property type="entry name" value="leucine-rich repeat transmembrane neuronal protein 4"/>
    <property type="match status" value="1"/>
</dbReference>
<dbReference type="Gene3D" id="3.80.10.10">
    <property type="entry name" value="Ribonuclease Inhibitor"/>
    <property type="match status" value="1"/>
</dbReference>
<dbReference type="InterPro" id="IPR001611">
    <property type="entry name" value="Leu-rich_rpt"/>
</dbReference>
<dbReference type="InterPro" id="IPR003591">
    <property type="entry name" value="Leu-rich_rpt_typical-subtyp"/>
</dbReference>
<dbReference type="InterPro" id="IPR050467">
    <property type="entry name" value="LRFN"/>
</dbReference>
<dbReference type="InterPro" id="IPR032675">
    <property type="entry name" value="LRR_dom_sf"/>
</dbReference>
<dbReference type="PANTHER" id="PTHR45842:SF12">
    <property type="entry name" value="KEKKON 5, ISOFORM A"/>
    <property type="match status" value="1"/>
</dbReference>
<dbReference type="PANTHER" id="PTHR45842">
    <property type="entry name" value="SYNAPTIC ADHESION-LIKE MOLECULE SALM"/>
    <property type="match status" value="1"/>
</dbReference>
<dbReference type="Pfam" id="PF13855">
    <property type="entry name" value="LRR_8"/>
    <property type="match status" value="3"/>
</dbReference>
<dbReference type="SMART" id="SM00369">
    <property type="entry name" value="LRR_TYP"/>
    <property type="match status" value="9"/>
</dbReference>
<dbReference type="SUPFAM" id="SSF52058">
    <property type="entry name" value="L domain-like"/>
    <property type="match status" value="1"/>
</dbReference>
<dbReference type="PROSITE" id="PS51450">
    <property type="entry name" value="LRR"/>
    <property type="match status" value="9"/>
</dbReference>
<keyword id="KW-1003">Cell membrane</keyword>
<keyword id="KW-0325">Glycoprotein</keyword>
<keyword id="KW-0433">Leucine-rich repeat</keyword>
<keyword id="KW-0472">Membrane</keyword>
<keyword id="KW-0628">Postsynaptic cell membrane</keyword>
<keyword id="KW-1185">Reference proteome</keyword>
<keyword id="KW-0677">Repeat</keyword>
<keyword id="KW-0732">Signal</keyword>
<keyword id="KW-0770">Synapse</keyword>
<keyword id="KW-0812">Transmembrane</keyword>
<keyword id="KW-1133">Transmembrane helix</keyword>
<evidence type="ECO:0000250" key="1"/>
<evidence type="ECO:0000255" key="2"/>
<evidence type="ECO:0000269" key="3">
    <source>
    </source>
</evidence>
<evidence type="ECO:0000305" key="4"/>